<evidence type="ECO:0000250" key="1">
    <source>
        <dbReference type="UniProtKB" id="P03901"/>
    </source>
</evidence>
<evidence type="ECO:0000250" key="2">
    <source>
        <dbReference type="UniProtKB" id="P03902"/>
    </source>
</evidence>
<evidence type="ECO:0000255" key="3"/>
<evidence type="ECO:0000305" key="4"/>
<organism>
    <name type="scientific">Nephelomys albigularis</name>
    <name type="common">Tomes's rice rat</name>
    <name type="synonym">Oryzomys albigularis</name>
    <dbReference type="NCBI Taxonomy" id="530178"/>
    <lineage>
        <taxon>Eukaryota</taxon>
        <taxon>Metazoa</taxon>
        <taxon>Chordata</taxon>
        <taxon>Craniata</taxon>
        <taxon>Vertebrata</taxon>
        <taxon>Euteleostomi</taxon>
        <taxon>Mammalia</taxon>
        <taxon>Eutheria</taxon>
        <taxon>Euarchontoglires</taxon>
        <taxon>Glires</taxon>
        <taxon>Rodentia</taxon>
        <taxon>Myomorpha</taxon>
        <taxon>Muroidea</taxon>
        <taxon>Cricetidae</taxon>
        <taxon>Sigmodontinae</taxon>
        <taxon>Nephelomys</taxon>
    </lineage>
</organism>
<gene>
    <name type="primary">MT-ND4L</name>
    <name type="synonym">MTND4L</name>
    <name type="synonym">NADH4L</name>
    <name type="synonym">ND4L</name>
</gene>
<comment type="function">
    <text evidence="1">Core subunit of the mitochondrial membrane respiratory chain NADH dehydrogenase (Complex I) which catalyzes electron transfer from NADH through the respiratory chain, using ubiquinone as an electron acceptor. Part of the enzyme membrane arm which is embedded in the lipid bilayer and involved in proton translocation.</text>
</comment>
<comment type="catalytic activity">
    <reaction evidence="1">
        <text>a ubiquinone + NADH + 5 H(+)(in) = a ubiquinol + NAD(+) + 4 H(+)(out)</text>
        <dbReference type="Rhea" id="RHEA:29091"/>
        <dbReference type="Rhea" id="RHEA-COMP:9565"/>
        <dbReference type="Rhea" id="RHEA-COMP:9566"/>
        <dbReference type="ChEBI" id="CHEBI:15378"/>
        <dbReference type="ChEBI" id="CHEBI:16389"/>
        <dbReference type="ChEBI" id="CHEBI:17976"/>
        <dbReference type="ChEBI" id="CHEBI:57540"/>
        <dbReference type="ChEBI" id="CHEBI:57945"/>
        <dbReference type="EC" id="7.1.1.2"/>
    </reaction>
    <physiologicalReaction direction="left-to-right" evidence="1">
        <dbReference type="Rhea" id="RHEA:29092"/>
    </physiologicalReaction>
</comment>
<comment type="subunit">
    <text evidence="2">Core subunit of respiratory chain NADH dehydrogenase (Complex I) which is composed of 45 different subunits.</text>
</comment>
<comment type="subcellular location">
    <subcellularLocation>
        <location evidence="2">Mitochondrion inner membrane</location>
        <topology evidence="3">Multi-pass membrane protein</topology>
    </subcellularLocation>
</comment>
<comment type="similarity">
    <text evidence="4">Belongs to the complex I subunit 4L family.</text>
</comment>
<proteinExistence type="inferred from homology"/>
<geneLocation type="mitochondrion"/>
<keyword id="KW-0249">Electron transport</keyword>
<keyword id="KW-0472">Membrane</keyword>
<keyword id="KW-0496">Mitochondrion</keyword>
<keyword id="KW-0999">Mitochondrion inner membrane</keyword>
<keyword id="KW-0520">NAD</keyword>
<keyword id="KW-0679">Respiratory chain</keyword>
<keyword id="KW-1278">Translocase</keyword>
<keyword id="KW-0812">Transmembrane</keyword>
<keyword id="KW-1133">Transmembrane helix</keyword>
<keyword id="KW-0813">Transport</keyword>
<keyword id="KW-0830">Ubiquinone</keyword>
<protein>
    <recommendedName>
        <fullName>NADH-ubiquinone oxidoreductase chain 4L</fullName>
        <ecNumber>7.1.1.2</ecNumber>
    </recommendedName>
    <alternativeName>
        <fullName>NADH dehydrogenase subunit 4L</fullName>
    </alternativeName>
</protein>
<reference key="1">
    <citation type="journal article" date="1998" name="Mol. Biol. Evol.">
        <title>Molecular systematics and paleobiogeography of the South American sigmodontine rodents.</title>
        <authorList>
            <person name="Engel S.R."/>
            <person name="Hogan K.M."/>
            <person name="Taylor J.F."/>
            <person name="Davis S.K."/>
        </authorList>
    </citation>
    <scope>NUCLEOTIDE SEQUENCE [GENOMIC DNA]</scope>
</reference>
<feature type="chain" id="PRO_0000254952" description="NADH-ubiquinone oxidoreductase chain 4L">
    <location>
        <begin position="1"/>
        <end position="98"/>
    </location>
</feature>
<feature type="transmembrane region" description="Helical" evidence="3">
    <location>
        <begin position="2"/>
        <end position="22"/>
    </location>
</feature>
<feature type="transmembrane region" description="Helical" evidence="3">
    <location>
        <begin position="26"/>
        <end position="46"/>
    </location>
</feature>
<feature type="transmembrane region" description="Helical" evidence="3">
    <location>
        <begin position="61"/>
        <end position="81"/>
    </location>
</feature>
<dbReference type="EC" id="7.1.1.2"/>
<dbReference type="EMBL" id="U83820">
    <property type="protein sequence ID" value="AAB87206.1"/>
    <property type="molecule type" value="Genomic_DNA"/>
</dbReference>
<dbReference type="SMR" id="O21558"/>
<dbReference type="GO" id="GO:0005743">
    <property type="term" value="C:mitochondrial inner membrane"/>
    <property type="evidence" value="ECO:0000250"/>
    <property type="project" value="UniProtKB"/>
</dbReference>
<dbReference type="GO" id="GO:0045271">
    <property type="term" value="C:respiratory chain complex I"/>
    <property type="evidence" value="ECO:0000250"/>
    <property type="project" value="UniProtKB"/>
</dbReference>
<dbReference type="GO" id="GO:0008137">
    <property type="term" value="F:NADH dehydrogenase (ubiquinone) activity"/>
    <property type="evidence" value="ECO:0000250"/>
    <property type="project" value="UniProtKB"/>
</dbReference>
<dbReference type="GO" id="GO:0042773">
    <property type="term" value="P:ATP synthesis coupled electron transport"/>
    <property type="evidence" value="ECO:0007669"/>
    <property type="project" value="InterPro"/>
</dbReference>
<dbReference type="FunFam" id="1.10.287.3510:FF:000002">
    <property type="entry name" value="NADH-ubiquinone oxidoreductase chain 4L"/>
    <property type="match status" value="1"/>
</dbReference>
<dbReference type="Gene3D" id="1.10.287.3510">
    <property type="match status" value="1"/>
</dbReference>
<dbReference type="InterPro" id="IPR001133">
    <property type="entry name" value="NADH_UbQ_OxRdtase_chain4L/K"/>
</dbReference>
<dbReference type="InterPro" id="IPR039428">
    <property type="entry name" value="NUOK/Mnh_C1-like"/>
</dbReference>
<dbReference type="PANTHER" id="PTHR11434:SF0">
    <property type="entry name" value="NADH-UBIQUINONE OXIDOREDUCTASE CHAIN 4L"/>
    <property type="match status" value="1"/>
</dbReference>
<dbReference type="PANTHER" id="PTHR11434">
    <property type="entry name" value="NADH-UBIQUINONE OXIDOREDUCTASE SUBUNIT ND4L"/>
    <property type="match status" value="1"/>
</dbReference>
<dbReference type="Pfam" id="PF00420">
    <property type="entry name" value="Oxidored_q2"/>
    <property type="match status" value="1"/>
</dbReference>
<name>NU4LM_NEPAB</name>
<accession>O21558</accession>
<sequence length="98" mass="10812">MSPIYINLMMAFIFSLLGTLLFRSHLMSTLLCLEGMMLSLFIMVTSSALNTQSMITYVIPITMLVFGACEAAIGLALLVMISNTYGTDYVQNLNLLQC</sequence>